<organism>
    <name type="scientific">Pseudomonas aeruginosa (strain ATCC 15692 / DSM 22644 / CIP 104116 / JCM 14847 / LMG 12228 / 1C / PRS 101 / PAO1)</name>
    <dbReference type="NCBI Taxonomy" id="208964"/>
    <lineage>
        <taxon>Bacteria</taxon>
        <taxon>Pseudomonadati</taxon>
        <taxon>Pseudomonadota</taxon>
        <taxon>Gammaproteobacteria</taxon>
        <taxon>Pseudomonadales</taxon>
        <taxon>Pseudomonadaceae</taxon>
        <taxon>Pseudomonas</taxon>
    </lineage>
</organism>
<proteinExistence type="evidence at protein level"/>
<feature type="signal peptide" evidence="1">
    <location>
        <begin position="1"/>
        <end position="25"/>
    </location>
</feature>
<feature type="chain" id="PRO_5004327468" description="Outer-membrane lipoprotein YfiB">
    <location>
        <begin position="26"/>
        <end position="168"/>
    </location>
</feature>
<feature type="domain" description="OmpA-like" evidence="2">
    <location>
        <begin position="53"/>
        <end position="168"/>
    </location>
</feature>
<feature type="lipid moiety-binding region" description="N-palmitoyl cysteine" evidence="1">
    <location>
        <position position="26"/>
    </location>
</feature>
<feature type="lipid moiety-binding region" description="S-diacylglycerol cysteine" evidence="1">
    <location>
        <position position="26"/>
    </location>
</feature>
<feature type="mutagenesis site" description="Is predominantly a monomer. Shows a much higher peptidoglycan-binding affinity. Forms a stable complex with YfiR." evidence="5 6 8">
    <original>L</original>
    <variation>P</variation>
    <location>
        <position position="43"/>
    </location>
</feature>
<feature type="mutagenesis site" description="Exists as a mixture of monomer and dimer in solution. Crystallizes as a dimer." evidence="5 8">
    <original>F</original>
    <variation>S</variation>
    <location>
        <position position="48"/>
    </location>
</feature>
<feature type="mutagenesis site" description="Exists as a mixture of monomer and dimer in solution. Is predominantly a dimer. Crystallizes as a dimer." evidence="5 8">
    <original>W</original>
    <variation>L</variation>
    <location>
        <position position="55"/>
    </location>
</feature>
<feature type="mutagenesis site" description="Weakens but does not abolish the interaction with YfiR." evidence="5">
    <original>M</original>
    <variation>A</variation>
    <location>
        <position position="59"/>
    </location>
</feature>
<feature type="mutagenesis site" description="Weakens but does not abolish the interaction with YfiR." evidence="5">
    <original>R</original>
    <variation>A</variation>
    <location>
        <position position="96"/>
    </location>
</feature>
<feature type="mutagenesis site" description="Cannot sequester YfiR at the outer membrane; when associated with A-105." evidence="4">
    <original>D</original>
    <variation>A</variation>
    <location>
        <position position="102"/>
    </location>
</feature>
<feature type="mutagenesis site" description="Cannot sequester YfiR at the outer membrane; when associated with A-102." evidence="4">
    <original>G</original>
    <variation>A</variation>
    <location>
        <position position="105"/>
    </location>
</feature>
<feature type="helix" evidence="24">
    <location>
        <begin position="37"/>
        <end position="46"/>
    </location>
</feature>
<feature type="strand" evidence="24">
    <location>
        <begin position="49"/>
        <end position="51"/>
    </location>
</feature>
<feature type="strand" evidence="24">
    <location>
        <begin position="54"/>
        <end position="60"/>
    </location>
</feature>
<feature type="strand" evidence="25">
    <location>
        <begin position="61"/>
        <end position="64"/>
    </location>
</feature>
<feature type="turn" evidence="26">
    <location>
        <begin position="65"/>
        <end position="67"/>
    </location>
</feature>
<feature type="strand" evidence="27">
    <location>
        <begin position="68"/>
        <end position="70"/>
    </location>
</feature>
<feature type="helix" evidence="25">
    <location>
        <begin position="74"/>
        <end position="89"/>
    </location>
</feature>
<feature type="strand" evidence="25">
    <location>
        <begin position="95"/>
        <end position="100"/>
    </location>
</feature>
<feature type="strand" evidence="25">
    <location>
        <begin position="103"/>
        <end position="105"/>
    </location>
</feature>
<feature type="helix" evidence="25">
    <location>
        <begin position="107"/>
        <end position="128"/>
    </location>
</feature>
<feature type="helix" evidence="25">
    <location>
        <begin position="132"/>
        <end position="134"/>
    </location>
</feature>
<feature type="strand" evidence="25">
    <location>
        <begin position="135"/>
        <end position="139"/>
    </location>
</feature>
<feature type="strand" evidence="26">
    <location>
        <begin position="149"/>
        <end position="151"/>
    </location>
</feature>
<feature type="helix" evidence="25">
    <location>
        <begin position="152"/>
        <end position="158"/>
    </location>
</feature>
<feature type="strand" evidence="25">
    <location>
        <begin position="159"/>
        <end position="164"/>
    </location>
</feature>
<protein>
    <recommendedName>
        <fullName evidence="9">Outer-membrane lipoprotein YfiB</fullName>
    </recommendedName>
    <alternativeName>
        <fullName evidence="10">Outer-membrane bound Pal-like protein</fullName>
    </alternativeName>
</protein>
<evidence type="ECO:0000255" key="1">
    <source>
        <dbReference type="PROSITE-ProRule" id="PRU00303"/>
    </source>
</evidence>
<evidence type="ECO:0000255" key="2">
    <source>
        <dbReference type="PROSITE-ProRule" id="PRU00473"/>
    </source>
</evidence>
<evidence type="ECO:0000269" key="3">
    <source>
    </source>
</evidence>
<evidence type="ECO:0000269" key="4">
    <source>
    </source>
</evidence>
<evidence type="ECO:0000269" key="5">
    <source>
    </source>
</evidence>
<evidence type="ECO:0000269" key="6">
    <source>
    </source>
</evidence>
<evidence type="ECO:0000269" key="7">
    <source>
    </source>
</evidence>
<evidence type="ECO:0000269" key="8">
    <source>
    </source>
</evidence>
<evidence type="ECO:0000303" key="9">
    <source>
    </source>
</evidence>
<evidence type="ECO:0000303" key="10">
    <source>
    </source>
</evidence>
<evidence type="ECO:0000305" key="11"/>
<evidence type="ECO:0000305" key="12">
    <source>
    </source>
</evidence>
<evidence type="ECO:0000312" key="13">
    <source>
        <dbReference type="EMBL" id="AAG04508.1"/>
    </source>
</evidence>
<evidence type="ECO:0007744" key="14">
    <source>
        <dbReference type="PDB" id="4ZHV"/>
    </source>
</evidence>
<evidence type="ECO:0007744" key="15">
    <source>
        <dbReference type="PDB" id="4ZHW"/>
    </source>
</evidence>
<evidence type="ECO:0007744" key="16">
    <source>
        <dbReference type="PDB" id="4ZHY"/>
    </source>
</evidence>
<evidence type="ECO:0007744" key="17">
    <source>
        <dbReference type="PDB" id="5EAZ"/>
    </source>
</evidence>
<evidence type="ECO:0007744" key="18">
    <source>
        <dbReference type="PDB" id="5EB0"/>
    </source>
</evidence>
<evidence type="ECO:0007744" key="19">
    <source>
        <dbReference type="PDB" id="5EB1"/>
    </source>
</evidence>
<evidence type="ECO:0007744" key="20">
    <source>
        <dbReference type="PDB" id="5Y61"/>
    </source>
</evidence>
<evidence type="ECO:0007744" key="21">
    <source>
        <dbReference type="PDB" id="6IKI"/>
    </source>
</evidence>
<evidence type="ECO:0007744" key="22">
    <source>
        <dbReference type="PDB" id="6IKJ"/>
    </source>
</evidence>
<evidence type="ECO:0007744" key="23">
    <source>
        <dbReference type="PDB" id="6IKK"/>
    </source>
</evidence>
<evidence type="ECO:0007829" key="24">
    <source>
        <dbReference type="PDB" id="4ZHV"/>
    </source>
</evidence>
<evidence type="ECO:0007829" key="25">
    <source>
        <dbReference type="PDB" id="4ZHW"/>
    </source>
</evidence>
<evidence type="ECO:0007829" key="26">
    <source>
        <dbReference type="PDB" id="5EB0"/>
    </source>
</evidence>
<evidence type="ECO:0007829" key="27">
    <source>
        <dbReference type="PDB" id="6IKI"/>
    </source>
</evidence>
<gene>
    <name evidence="9" type="primary">yfiB</name>
    <name evidence="13" type="ordered locus">PA1119</name>
</gene>
<dbReference type="EMBL" id="AE004091">
    <property type="protein sequence ID" value="AAG04508.1"/>
    <property type="molecule type" value="Genomic_DNA"/>
</dbReference>
<dbReference type="PIR" id="C83505">
    <property type="entry name" value="C83505"/>
</dbReference>
<dbReference type="RefSeq" id="NP_249810.1">
    <property type="nucleotide sequence ID" value="NC_002516.2"/>
</dbReference>
<dbReference type="RefSeq" id="WP_003082254.1">
    <property type="nucleotide sequence ID" value="NZ_QZGE01000006.1"/>
</dbReference>
<dbReference type="PDB" id="4ZHV">
    <property type="method" value="X-ray"/>
    <property type="resolution" value="1.58 A"/>
    <property type="chains" value="A/B=1-168"/>
</dbReference>
<dbReference type="PDB" id="4ZHW">
    <property type="method" value="X-ray"/>
    <property type="resolution" value="1.39 A"/>
    <property type="chains" value="A=1-168"/>
</dbReference>
<dbReference type="PDB" id="4ZHY">
    <property type="method" value="X-ray"/>
    <property type="resolution" value="1.97 A"/>
    <property type="chains" value="B=1-168"/>
</dbReference>
<dbReference type="PDB" id="5EAZ">
    <property type="method" value="X-ray"/>
    <property type="resolution" value="2.15 A"/>
    <property type="chains" value="A/B/C/D=34-168"/>
</dbReference>
<dbReference type="PDB" id="5EB0">
    <property type="method" value="X-ray"/>
    <property type="resolution" value="2.80 A"/>
    <property type="chains" value="A/B=34-168"/>
</dbReference>
<dbReference type="PDB" id="5EB1">
    <property type="method" value="X-ray"/>
    <property type="resolution" value="1.80 A"/>
    <property type="chains" value="B/D=34-168"/>
</dbReference>
<dbReference type="PDB" id="5Y61">
    <property type="method" value="X-ray"/>
    <property type="resolution" value="2.99 A"/>
    <property type="chains" value="B/D=34-168"/>
</dbReference>
<dbReference type="PDB" id="6IKI">
    <property type="method" value="X-ray"/>
    <property type="resolution" value="2.20 A"/>
    <property type="chains" value="A/B=1-168"/>
</dbReference>
<dbReference type="PDB" id="6IKJ">
    <property type="method" value="X-ray"/>
    <property type="resolution" value="1.76 A"/>
    <property type="chains" value="A/B=1-168"/>
</dbReference>
<dbReference type="PDB" id="6IKK">
    <property type="method" value="X-ray"/>
    <property type="resolution" value="2.19 A"/>
    <property type="chains" value="A/C=1-168"/>
</dbReference>
<dbReference type="PDBsum" id="4ZHV"/>
<dbReference type="PDBsum" id="4ZHW"/>
<dbReference type="PDBsum" id="4ZHY"/>
<dbReference type="PDBsum" id="5EAZ"/>
<dbReference type="PDBsum" id="5EB0"/>
<dbReference type="PDBsum" id="5EB1"/>
<dbReference type="PDBsum" id="5Y61"/>
<dbReference type="PDBsum" id="6IKI"/>
<dbReference type="PDBsum" id="6IKJ"/>
<dbReference type="PDBsum" id="6IKK"/>
<dbReference type="SMR" id="Q9I4L6"/>
<dbReference type="FunCoup" id="Q9I4L6">
    <property type="interactions" value="58"/>
</dbReference>
<dbReference type="STRING" id="208964.PA1119"/>
<dbReference type="PaxDb" id="208964-PA1119"/>
<dbReference type="DNASU" id="881938"/>
<dbReference type="GeneID" id="881938"/>
<dbReference type="KEGG" id="pae:PA1119"/>
<dbReference type="PATRIC" id="fig|208964.12.peg.1161"/>
<dbReference type="PseudoCAP" id="PA1119"/>
<dbReference type="HOGENOM" id="CLU_016890_12_3_6"/>
<dbReference type="InParanoid" id="Q9I4L6"/>
<dbReference type="OrthoDB" id="9782229at2"/>
<dbReference type="PhylomeDB" id="Q9I4L6"/>
<dbReference type="BioCyc" id="PAER208964:G1FZ6-1145-MONOMER"/>
<dbReference type="EvolutionaryTrace" id="Q9I4L6"/>
<dbReference type="Proteomes" id="UP000002438">
    <property type="component" value="Chromosome"/>
</dbReference>
<dbReference type="GO" id="GO:0120101">
    <property type="term" value="C:bacterial-type flagellum stator complex"/>
    <property type="evidence" value="ECO:0000318"/>
    <property type="project" value="GO_Central"/>
</dbReference>
<dbReference type="GO" id="GO:0009279">
    <property type="term" value="C:cell outer membrane"/>
    <property type="evidence" value="ECO:0007669"/>
    <property type="project" value="UniProtKB-SubCell"/>
</dbReference>
<dbReference type="GO" id="GO:0071973">
    <property type="term" value="P:bacterial-type flagellum-dependent cell motility"/>
    <property type="evidence" value="ECO:0000318"/>
    <property type="project" value="GO_Central"/>
</dbReference>
<dbReference type="CDD" id="cd07185">
    <property type="entry name" value="OmpA_C-like"/>
    <property type="match status" value="1"/>
</dbReference>
<dbReference type="Gene3D" id="3.30.1330.60">
    <property type="entry name" value="OmpA-like domain"/>
    <property type="match status" value="1"/>
</dbReference>
<dbReference type="InterPro" id="IPR050330">
    <property type="entry name" value="Bact_OuterMem_StrucFunc"/>
</dbReference>
<dbReference type="InterPro" id="IPR006664">
    <property type="entry name" value="OMP_bac"/>
</dbReference>
<dbReference type="InterPro" id="IPR006665">
    <property type="entry name" value="OmpA-like"/>
</dbReference>
<dbReference type="InterPro" id="IPR036737">
    <property type="entry name" value="OmpA-like_sf"/>
</dbReference>
<dbReference type="PANTHER" id="PTHR30329:SF17">
    <property type="entry name" value="LIPOPROTEIN YFIB-RELATED"/>
    <property type="match status" value="1"/>
</dbReference>
<dbReference type="PANTHER" id="PTHR30329">
    <property type="entry name" value="STATOR ELEMENT OF FLAGELLAR MOTOR COMPLEX"/>
    <property type="match status" value="1"/>
</dbReference>
<dbReference type="Pfam" id="PF00691">
    <property type="entry name" value="OmpA"/>
    <property type="match status" value="1"/>
</dbReference>
<dbReference type="PRINTS" id="PR01021">
    <property type="entry name" value="OMPADOMAIN"/>
</dbReference>
<dbReference type="SUPFAM" id="SSF103088">
    <property type="entry name" value="OmpA-like"/>
    <property type="match status" value="1"/>
</dbReference>
<dbReference type="PROSITE" id="PS51123">
    <property type="entry name" value="OMPA_2"/>
    <property type="match status" value="1"/>
</dbReference>
<dbReference type="PROSITE" id="PS51257">
    <property type="entry name" value="PROKAR_LIPOPROTEIN"/>
    <property type="match status" value="1"/>
</dbReference>
<keyword id="KW-0002">3D-structure</keyword>
<keyword id="KW-0998">Cell outer membrane</keyword>
<keyword id="KW-0449">Lipoprotein</keyword>
<keyword id="KW-0472">Membrane</keyword>
<keyword id="KW-0564">Palmitate</keyword>
<keyword id="KW-1185">Reference proteome</keyword>
<keyword id="KW-0732">Signal</keyword>
<accession>Q9I4L6</accession>
<name>YFIB_PSEAE</name>
<comment type="function">
    <text evidence="3 4">Activates the diguanylate cyclase TpbB/YfiN by sequestering YfiR at the outer membrane, which counteracts the YfiR-mediated repression of TpbB/YfiN at the inner membrane and leads to increased c-di-GMP production (PubMed:20300602, PubMed:22719254). May act as a sensor of envelope stress (PubMed:20300602, PubMed:22719254).</text>
</comment>
<comment type="function">
    <text evidence="3 4">Part of the YfiB-TpbB-YfiR (or yfiBNR) system, encoding a tripartite signaling module that modulates intracellular c-di-GMP levels (PubMed:20300602, PubMed:22719254). The system is a key regulator of the small colony variant (SCV) phenotype, and plays an important role in biofilm formation and in vivo persistence (PubMed:20300602). The c-di-GMP produced by TpbB/YfiN stimulates the production of the Pel and Psl exopolysaccharides, which promotes surface attachment, generates an SCV phenotype and confers resistance against phagocytosis (PubMed:20300602).</text>
</comment>
<comment type="activity regulation">
    <text evidence="4 6 7">Both lipid anchor in the outer membrane and peptidoglycan binding are required for full activity (PubMed:22719254). Once activated by certain cell stress, the dimeric YfiB transforms from a compact conformation to a stretched conformation, allowing the periplasmic domain of the membrane-anchored YfiB to penetrate the cell wall and sequester the YfiR dimer (PubMed:27113583). GMP enhances the binding affinity between YfiB and YfiR (PubMed:28870806).</text>
</comment>
<comment type="subunit">
    <text evidence="5 6 7 8">Homodimer (PubMed:26593397, PubMed:27113583, PubMed:30404734). Interacts with YfiR (PubMed:26593397, PubMed:27113583, PubMed:28870806, PubMed:30404734). The YfiB-YfiR complex is a 2:2 heterotetramer (PubMed:27113583).</text>
</comment>
<comment type="subcellular location">
    <subcellularLocation>
        <location evidence="4 12">Cell outer membrane</location>
        <topology evidence="1 4">Lipid-anchor</topology>
    </subcellularLocation>
</comment>
<comment type="domain">
    <text evidence="5 6">Dimerizes via its N-terminal region.</text>
</comment>
<comment type="disruption phenotype">
    <text evidence="3">Deletion of the gene does not affect attachment or colony morphology.</text>
</comment>
<comment type="similarity">
    <text evidence="11">Belongs to the outer membrane OOP (TC 1.B.6) superfamily.</text>
</comment>
<sequence length="168" mass="18410">MLPQRLHPSRLLALALFSLVLGLAGCQTKPPQTGLSAEQIAVLQEQGFELRDEGWEFGMSSKVLFGNNLDRLNPDSRNTLTKIARALLAVDIDKVRLEGHTDNYGDEGYNQKLSERRAESVAAVFREAGMPAANIEVRGLGMSKPVADNKTRAGRSENRRVAIIVPAE</sequence>
<reference key="1">
    <citation type="journal article" date="2000" name="Nature">
        <title>Complete genome sequence of Pseudomonas aeruginosa PAO1, an opportunistic pathogen.</title>
        <authorList>
            <person name="Stover C.K."/>
            <person name="Pham X.-Q.T."/>
            <person name="Erwin A.L."/>
            <person name="Mizoguchi S.D."/>
            <person name="Warrener P."/>
            <person name="Hickey M.J."/>
            <person name="Brinkman F.S.L."/>
            <person name="Hufnagle W.O."/>
            <person name="Kowalik D.J."/>
            <person name="Lagrou M."/>
            <person name="Garber R.L."/>
            <person name="Goltry L."/>
            <person name="Tolentino E."/>
            <person name="Westbrock-Wadman S."/>
            <person name="Yuan Y."/>
            <person name="Brody L.L."/>
            <person name="Coulter S.N."/>
            <person name="Folger K.R."/>
            <person name="Kas A."/>
            <person name="Larbig K."/>
            <person name="Lim R.M."/>
            <person name="Smith K.A."/>
            <person name="Spencer D.H."/>
            <person name="Wong G.K.-S."/>
            <person name="Wu Z."/>
            <person name="Paulsen I.T."/>
            <person name="Reizer J."/>
            <person name="Saier M.H. Jr."/>
            <person name="Hancock R.E.W."/>
            <person name="Lory S."/>
            <person name="Olson M.V."/>
        </authorList>
    </citation>
    <scope>NUCLEOTIDE SEQUENCE [LARGE SCALE GENOMIC DNA]</scope>
    <source>
        <strain>ATCC 15692 / DSM 22644 / CIP 104116 / JCM 14847 / LMG 12228 / 1C / PRS 101 / PAO1</strain>
    </source>
</reference>
<reference key="2">
    <citation type="journal article" date="2010" name="PLoS Pathog.">
        <title>YfiBNR mediates cyclic di-GMP dependent small colony variant formation and persistence in Pseudomonas aeruginosa.</title>
        <authorList>
            <person name="Malone J.G."/>
            <person name="Jaeger T."/>
            <person name="Spangler C."/>
            <person name="Ritz D."/>
            <person name="Spang A."/>
            <person name="Arrieumerlou C."/>
            <person name="Kaever V."/>
            <person name="Landmann R."/>
            <person name="Jenal U."/>
        </authorList>
    </citation>
    <scope>FUNCTION</scope>
    <scope>SUBCELLULAR LOCATION</scope>
    <scope>DISRUPTION PHENOTYPE</scope>
    <source>
        <strain>ATCC 15692 / DSM 22644 / CIP 104116 / JCM 14847 / LMG 12228 / 1C / PRS 101 / PAO1</strain>
    </source>
</reference>
<reference key="3">
    <citation type="journal article" date="2012" name="PLoS Pathog.">
        <title>The YfiBNR signal transduction mechanism reveals novel targets for the evolution of persistent Pseudomonas aeruginosa in cystic fibrosis airways.</title>
        <authorList>
            <person name="Malone J.G."/>
            <person name="Jaeger T."/>
            <person name="Manfredi P."/>
            <person name="Doetsch A."/>
            <person name="Blanka A."/>
            <person name="Bos R."/>
            <person name="Cornelis G.R."/>
            <person name="Haeussler S."/>
            <person name="Jenal U."/>
        </authorList>
    </citation>
    <scope>FUNCTION</scope>
    <scope>ACTIVITY REGULATION</scope>
    <scope>SUBCELLULAR LOCATION</scope>
    <scope>MUTAGENESIS OF ASP-102 AND GLY-105</scope>
    <source>
        <strain>ATCC 15692 / DSM 22644 / CIP 104116 / JCM 14847 / LMG 12228 / 1C / PRS 101 / PAO1</strain>
    </source>
</reference>
<reference evidence="14 15 16" key="4">
    <citation type="journal article" date="2015" name="Sci. Rep.">
        <title>Structural insights into YfiR sequestering by YfiB in Pseudomonas aeruginosa PAO1.</title>
        <authorList>
            <person name="Li S."/>
            <person name="Li T."/>
            <person name="Xu Y."/>
            <person name="Zhang Q."/>
            <person name="Zhang W."/>
            <person name="Che S."/>
            <person name="Liu R."/>
            <person name="Wang Y."/>
            <person name="Bartlam M."/>
        </authorList>
    </citation>
    <scope>X-RAY CRYSTALLOGRAPHY (1.39 ANGSTROMS) OF YFIB ALONE AND IN COMPLEX WITH YFIR</scope>
    <scope>SUBUNIT</scope>
    <scope>INTERACTION WITH YFIR</scope>
    <scope>DOMAIN</scope>
    <scope>MUTAGENESIS OF LEU-43; PHE-48; TRP-55; MET-59 AND ARG-96</scope>
    <source>
        <strain>ATCC 15692 / DSM 22644 / CIP 104116 / JCM 14847 / LMG 12228 / 1C / PRS 101 / PAO1</strain>
    </source>
</reference>
<reference evidence="17 18 19" key="5">
    <citation type="journal article" date="2016" name="Protein Cell">
        <title>Structural insights into the regulatory mechanism of the Pseudomonas aeruginosa YfiBNR system.</title>
        <authorList>
            <person name="Xu M."/>
            <person name="Yang X."/>
            <person name="Yang X.A."/>
            <person name="Zhou L."/>
            <person name="Liu T.Z."/>
            <person name="Fan Z."/>
            <person name="Jiang T."/>
        </authorList>
    </citation>
    <scope>X-RAY CRYSTALLOGRAPHY (1.80 ANGSTROMS) OF 34-168 OF YFIB ALONE AND MUTANT PRO-43 IN COMPLEX WITH YFIR</scope>
    <scope>ACTIVITY REGULATION</scope>
    <scope>SUBUNIT</scope>
    <scope>INTERACTION WITH YFIR</scope>
    <scope>DOMAIN</scope>
    <scope>MUTAGENESIS OF LEU-43</scope>
</reference>
<reference evidence="20" key="6">
    <citation type="journal article" date="2017" name="Biochem. Biophys. Res. Commun.">
        <title>Structural insights into the functional role of GMP in modulating the YfiBNR system.</title>
        <authorList>
            <person name="Zhou L."/>
            <person name="Xu M."/>
            <person name="Jiang T."/>
        </authorList>
    </citation>
    <scope>X-RAY CRYSTALLOGRAPHY (2.99 ANGSTROMS) OF 34-168 IN COMPLEX WITH YFIR</scope>
    <scope>ACTIVITY REGULATION</scope>
    <scope>INTERACTION WITH YFIR</scope>
    <source>
        <strain>ATCC 15692 / DSM 22644 / CIP 104116 / JCM 14847 / LMG 12228 / 1C / PRS 101 / PAO1</strain>
    </source>
</reference>
<reference evidence="21 22 23" key="7">
    <citation type="journal article" date="2018" name="Biochem. Biophys. Res. Commun.">
        <title>Structural analysis of activating mutants of YfiB from Pseudomonas aeruginosa PAO1.</title>
        <authorList>
            <person name="Li S."/>
            <person name="Li T."/>
            <person name="Teng X."/>
            <person name="Lou X."/>
            <person name="Xu Y."/>
            <person name="Zhang Q."/>
            <person name="Bartlam M."/>
        </authorList>
    </citation>
    <scope>X-RAY CRYSTALLOGRAPHY (1.76 ANGSTROMS) OF MUTANTS SER-48; LEU-55 AND MUTANT PRO-43 IN COMPLEX WITH YFIR</scope>
    <scope>SUBUNIT</scope>
    <scope>INTERACTION WITH YFIR</scope>
    <scope>MUTAGENESIS OF LEU-43; PHE-48 AND TRP-55</scope>
    <source>
        <strain>ATCC 15692 / DSM 22644 / CIP 104116 / JCM 14847 / LMG 12228 / 1C / PRS 101 / PAO1</strain>
    </source>
</reference>